<proteinExistence type="evidence at protein level"/>
<feature type="chain" id="PRO_0000314056" description="E3 ubiquitin-protein ligase RNF12-A">
    <location>
        <begin position="1"/>
        <end position="622"/>
    </location>
</feature>
<feature type="zinc finger region" description="RING-type; atypical" evidence="3">
    <location>
        <begin position="568"/>
        <end position="609"/>
    </location>
</feature>
<feature type="region of interest" description="Disordered" evidence="4">
    <location>
        <begin position="1"/>
        <end position="26"/>
    </location>
</feature>
<feature type="region of interest" description="Disordered" evidence="4">
    <location>
        <begin position="67"/>
        <end position="386"/>
    </location>
</feature>
<feature type="region of interest" description="Disordered" evidence="4">
    <location>
        <begin position="473"/>
        <end position="514"/>
    </location>
</feature>
<feature type="short sequence motif" description="PDZ-binding" evidence="2 6">
    <location>
        <begin position="619"/>
        <end position="622"/>
    </location>
</feature>
<feature type="compositionally biased region" description="Low complexity" evidence="4">
    <location>
        <begin position="11"/>
        <end position="21"/>
    </location>
</feature>
<feature type="compositionally biased region" description="Polar residues" evidence="4">
    <location>
        <begin position="110"/>
        <end position="138"/>
    </location>
</feature>
<feature type="compositionally biased region" description="Polar residues" evidence="4">
    <location>
        <begin position="147"/>
        <end position="163"/>
    </location>
</feature>
<feature type="compositionally biased region" description="Basic and acidic residues" evidence="4">
    <location>
        <begin position="216"/>
        <end position="242"/>
    </location>
</feature>
<feature type="compositionally biased region" description="Polar residues" evidence="4">
    <location>
        <begin position="247"/>
        <end position="256"/>
    </location>
</feature>
<feature type="compositionally biased region" description="Low complexity" evidence="4">
    <location>
        <begin position="272"/>
        <end position="289"/>
    </location>
</feature>
<feature type="compositionally biased region" description="Polar residues" evidence="4">
    <location>
        <begin position="300"/>
        <end position="317"/>
    </location>
</feature>
<feature type="compositionally biased region" description="Low complexity" evidence="4">
    <location>
        <begin position="318"/>
        <end position="331"/>
    </location>
</feature>
<feature type="compositionally biased region" description="Polar residues" evidence="4">
    <location>
        <begin position="332"/>
        <end position="341"/>
    </location>
</feature>
<feature type="compositionally biased region" description="Basic and acidic residues" evidence="4">
    <location>
        <begin position="355"/>
        <end position="365"/>
    </location>
</feature>
<feature type="compositionally biased region" description="Polar residues" evidence="4">
    <location>
        <begin position="366"/>
        <end position="382"/>
    </location>
</feature>
<feature type="splice variant" id="VSP_052632" description="In isoform 2." evidence="6">
    <location>
        <begin position="85"/>
        <end position="90"/>
    </location>
</feature>
<feature type="mutagenesis site" description="Almost completely abolishes suppression of secondary axis formation and organizer function, and disrupts ldb1 ubiquitination; when associated with A-594." evidence="5">
    <original>H</original>
    <variation>A</variation>
    <location>
        <position position="591"/>
    </location>
</feature>
<feature type="mutagenesis site" description="Almost completely abolishes suppression of secondary axis formation and organizer function, and disrupts ldb1 ubiquitination; when associated with A-591." evidence="5">
    <original>C</original>
    <variation>A</variation>
    <location>
        <position position="594"/>
    </location>
</feature>
<organism>
    <name type="scientific">Xenopus laevis</name>
    <name type="common">African clawed frog</name>
    <dbReference type="NCBI Taxonomy" id="8355"/>
    <lineage>
        <taxon>Eukaryota</taxon>
        <taxon>Metazoa</taxon>
        <taxon>Chordata</taxon>
        <taxon>Craniata</taxon>
        <taxon>Vertebrata</taxon>
        <taxon>Euteleostomi</taxon>
        <taxon>Amphibia</taxon>
        <taxon>Batrachia</taxon>
        <taxon>Anura</taxon>
        <taxon>Pipoidea</taxon>
        <taxon>Pipidae</taxon>
        <taxon>Xenopodinae</taxon>
        <taxon>Xenopus</taxon>
        <taxon>Xenopus</taxon>
    </lineage>
</organism>
<comment type="function">
    <text evidence="5">Acts as an E3 ubiquitin-protein ligase specific for ldb1, mediating ubiquitination and proteasome-dependent degradation of excess ldb1 in a RING-dependent manner. Does not degrade ldb1 bound to lhx1/lim1, nor lim1 itself and thus contributes to the establishment of proper ldb1-lhx1/lim1 stoichiometry and the formation of a ldb1-lhx1/lim1 complex. Interferes with Spemann organizer function and suppresses secondary axis formation induced by ldb1 and lhx1/lim1.</text>
</comment>
<comment type="catalytic activity">
    <reaction>
        <text>S-ubiquitinyl-[E2 ubiquitin-conjugating enzyme]-L-cysteine + [acceptor protein]-L-lysine = [E2 ubiquitin-conjugating enzyme]-L-cysteine + N(6)-ubiquitinyl-[acceptor protein]-L-lysine.</text>
        <dbReference type="EC" id="2.3.2.27"/>
    </reaction>
</comment>
<comment type="pathway">
    <text>Protein modification; protein ubiquitination.</text>
</comment>
<comment type="subunit">
    <text evidence="5">Forms homodimers through the C-terminal region. The N-terminus interacts with the homeobox of LIM/homeobox factor lhx1/lim1, with lhx3/lim3 and lhx5/lim5, and with the N-terminus of ldb1.</text>
</comment>
<comment type="subcellular location">
    <subcellularLocation>
        <location evidence="1">Nucleus</location>
    </subcellularLocation>
</comment>
<comment type="alternative products">
    <event type="alternative splicing"/>
    <isoform>
        <id>Q641J8-1</id>
        <name>1</name>
        <sequence type="displayed"/>
    </isoform>
    <isoform>
        <id>Q641J8-2</id>
        <name evidence="5">2</name>
        <sequence type="described" ref="VSP_052632"/>
    </isoform>
</comment>
<comment type="tissue specificity">
    <text evidence="5">Shows overlapping expression with lhx1/lim1 and ldb1 in the gastrula mesoderm, and expression overlaps with ldb1 throughout early embryogenesis. After gastrulation, expression is gradually restricted to tissues originated from the ectoderm, the neuroectoderm, neural crest and epidermis, and subsequently to the neural tube as well as the head and tailbud region.</text>
</comment>
<comment type="developmental stage">
    <text evidence="5">Expressed both maternally and zygotically. Expressed at the cleavage stage, with expression disappearing at the gastrula stage.</text>
</comment>
<comment type="similarity">
    <text evidence="7">Belongs to the RNF12 family.</text>
</comment>
<dbReference type="EC" id="2.3.2.27"/>
<dbReference type="EMBL" id="AB114039">
    <property type="protein sequence ID" value="BAC81441.1"/>
    <property type="molecule type" value="mRNA"/>
</dbReference>
<dbReference type="EMBL" id="BC082339">
    <property type="protein sequence ID" value="AAH82339.1"/>
    <property type="molecule type" value="mRNA"/>
</dbReference>
<dbReference type="RefSeq" id="NP_001082725.1">
    <molecule id="Q641J8-1"/>
    <property type="nucleotide sequence ID" value="NM_001089256.1"/>
</dbReference>
<dbReference type="RefSeq" id="XP_018087398.1">
    <property type="nucleotide sequence ID" value="XM_018231909.1"/>
</dbReference>
<dbReference type="RefSeq" id="XP_018087399.1">
    <molecule id="Q641J8-2"/>
    <property type="nucleotide sequence ID" value="XM_018231910.1"/>
</dbReference>
<dbReference type="SMR" id="Q641J8"/>
<dbReference type="BioGRID" id="100010">
    <property type="interactions" value="1"/>
</dbReference>
<dbReference type="DNASU" id="398680"/>
<dbReference type="GeneID" id="398680"/>
<dbReference type="KEGG" id="xla:398680"/>
<dbReference type="AGR" id="Xenbase:XB-GENE-866117"/>
<dbReference type="CTD" id="398680"/>
<dbReference type="Xenbase" id="XB-GENE-866117">
    <property type="gene designation" value="rlim.S"/>
</dbReference>
<dbReference type="OMA" id="YEGGHEG"/>
<dbReference type="OrthoDB" id="8062037at2759"/>
<dbReference type="UniPathway" id="UPA00143"/>
<dbReference type="Proteomes" id="UP000186698">
    <property type="component" value="Chromosome 8S"/>
</dbReference>
<dbReference type="Bgee" id="398680">
    <property type="expression patterns" value="Expressed in blastula and 19 other cell types or tissues"/>
</dbReference>
<dbReference type="GO" id="GO:0005634">
    <property type="term" value="C:nucleus"/>
    <property type="evidence" value="ECO:0000250"/>
    <property type="project" value="UniProtKB"/>
</dbReference>
<dbReference type="GO" id="GO:0140297">
    <property type="term" value="F:DNA-binding transcription factor binding"/>
    <property type="evidence" value="ECO:0000353"/>
    <property type="project" value="UniProtKB"/>
</dbReference>
<dbReference type="GO" id="GO:0042802">
    <property type="term" value="F:identical protein binding"/>
    <property type="evidence" value="ECO:0000353"/>
    <property type="project" value="UniProtKB"/>
</dbReference>
<dbReference type="GO" id="GO:0001221">
    <property type="term" value="F:transcription coregulator binding"/>
    <property type="evidence" value="ECO:0000353"/>
    <property type="project" value="UniProtKB"/>
</dbReference>
<dbReference type="GO" id="GO:0061630">
    <property type="term" value="F:ubiquitin protein ligase activity"/>
    <property type="evidence" value="ECO:0000318"/>
    <property type="project" value="GO_Central"/>
</dbReference>
<dbReference type="GO" id="GO:0004842">
    <property type="term" value="F:ubiquitin-protein transferase activity"/>
    <property type="evidence" value="ECO:0000314"/>
    <property type="project" value="UniProtKB"/>
</dbReference>
<dbReference type="GO" id="GO:0008270">
    <property type="term" value="F:zinc ion binding"/>
    <property type="evidence" value="ECO:0007669"/>
    <property type="project" value="UniProtKB-KW"/>
</dbReference>
<dbReference type="GO" id="GO:0000578">
    <property type="term" value="P:embryonic axis specification"/>
    <property type="evidence" value="ECO:0000315"/>
    <property type="project" value="UniProtKB"/>
</dbReference>
<dbReference type="GO" id="GO:0016567">
    <property type="term" value="P:protein ubiquitination"/>
    <property type="evidence" value="ECO:0000250"/>
    <property type="project" value="UniProtKB"/>
</dbReference>
<dbReference type="GO" id="GO:0006511">
    <property type="term" value="P:ubiquitin-dependent protein catabolic process"/>
    <property type="evidence" value="ECO:0000314"/>
    <property type="project" value="UniProtKB"/>
</dbReference>
<dbReference type="CDD" id="cd16674">
    <property type="entry name" value="RING-H2_RNF12"/>
    <property type="match status" value="1"/>
</dbReference>
<dbReference type="FunFam" id="3.30.40.10:FF:000054">
    <property type="entry name" value="E3 ubiquitin-protein ligase RLIM isoform X1"/>
    <property type="match status" value="1"/>
</dbReference>
<dbReference type="Gene3D" id="3.30.40.10">
    <property type="entry name" value="Zinc/RING finger domain, C3HC4 (zinc finger)"/>
    <property type="match status" value="1"/>
</dbReference>
<dbReference type="InterPro" id="IPR051834">
    <property type="entry name" value="RING_finger_E3_ligase"/>
</dbReference>
<dbReference type="InterPro" id="IPR001841">
    <property type="entry name" value="Znf_RING"/>
</dbReference>
<dbReference type="InterPro" id="IPR013083">
    <property type="entry name" value="Znf_RING/FYVE/PHD"/>
</dbReference>
<dbReference type="PANTHER" id="PTHR45931:SF4">
    <property type="entry name" value="E3 UBIQUITIN-PROTEIN LIGASE RLIM"/>
    <property type="match status" value="1"/>
</dbReference>
<dbReference type="PANTHER" id="PTHR45931">
    <property type="entry name" value="SI:CH211-59O9.10"/>
    <property type="match status" value="1"/>
</dbReference>
<dbReference type="Pfam" id="PF13639">
    <property type="entry name" value="zf-RING_2"/>
    <property type="match status" value="1"/>
</dbReference>
<dbReference type="SMART" id="SM00184">
    <property type="entry name" value="RING"/>
    <property type="match status" value="1"/>
</dbReference>
<dbReference type="SUPFAM" id="SSF57850">
    <property type="entry name" value="RING/U-box"/>
    <property type="match status" value="1"/>
</dbReference>
<dbReference type="PROSITE" id="PS50089">
    <property type="entry name" value="ZF_RING_2"/>
    <property type="match status" value="1"/>
</dbReference>
<accession>Q641J8</accession>
<accession>Q7T038</accession>
<reference evidence="7 9" key="1">
    <citation type="journal article" date="2003" name="Development">
        <title>Selective degradation of excess Ldb1 by Rnf12/RLIM confers proper Ldb1 expression levels and Xlim-1/Ldb1 stoichiometry in Xenopus organizer functions.</title>
        <authorList>
            <person name="Hiratani I."/>
            <person name="Yamamoto N."/>
            <person name="Mochizuki T."/>
            <person name="Ohmori S.-Y."/>
            <person name="Taira M."/>
        </authorList>
    </citation>
    <scope>NUCLEOTIDE SEQUENCE [MRNA] (ISOFORM 2)</scope>
    <scope>FUNCTION</scope>
    <scope>INTERACTION WITH LDB1; LHX1; LHX3 AND LHX5</scope>
    <scope>HOMODIMERIZATION</scope>
    <scope>TISSUE SPECIFICITY</scope>
    <scope>DEVELOPMENTAL STAGE</scope>
    <scope>MUTAGENESIS OF HIS-591 AND CYS-594</scope>
    <source>
        <tissue evidence="5">Gastrula</tissue>
    </source>
</reference>
<reference evidence="7 8" key="2">
    <citation type="submission" date="2004-09" db="EMBL/GenBank/DDBJ databases">
        <authorList>
            <consortium name="NIH - Xenopus Gene Collection (XGC) project"/>
        </authorList>
    </citation>
    <scope>NUCLEOTIDE SEQUENCE [LARGE SCALE MRNA] (ISOFORM 1)</scope>
    <source>
        <tissue evidence="8">Spleen</tissue>
    </source>
</reference>
<sequence length="622" mass="68901">MESADSTGKGSIEQSESQRQSQMDRLDREEAFYQFVNNLNEDDYRLMRDNNLLGTPGEITKEELLRRLQQIKEGPPQPSTEETRGDSVSTGGDPAEDSSNGDSIIDWLNSVRQTGNTTRSGQRGNQSWRAVSRTNPNSGDFRFSLEINVNRTSGNPSMPSLDQSAEMPGAEDMEVSSQGEAENEPEPIPIATRSAPAEVTVEEAPIQRGQRRARSRSPDQRRTRARTDRSRSPLHHAVDPPIRRAPHSSSQTVDTSNTEEAEGSSRTRHHVSSQVQNSSSSNETEGSSRTRQHIPARQQVLGTEGQSQSTVHLSNPETRSSSQTPQTDSSTNAETTGTGQRPPTIVLDLQVRRVRPGDYRQRDSIANRTRSRSQTPNNTVTYESERGGFRRTFSRSERAGVRTYVSTIRIPIRRILNTGLSETTSVAIQTMLRQIMTGFGELSYFMYNDNDTDPNNPTAVSPTAAVPGEAQNNANAEVRAPSAEPTEPVAPVETDEGSNVSTTATRREGRNSRGAVTFEESGSLPFLSLAQFFLLNEDDDDQPRGLTKEQIDNLSTRNFGENDALKTCSVCITEYTEGNKLRKLPCSHEYHIHCIDRWLSENSTCPICRRAVLVASNRESIV</sequence>
<protein>
    <recommendedName>
        <fullName>E3 ubiquitin-protein ligase RNF12-A</fullName>
        <ecNumber>2.3.2.27</ecNumber>
    </recommendedName>
    <alternativeName>
        <fullName>RING finger protein 12-A</fullName>
    </alternativeName>
    <alternativeName>
        <fullName evidence="7">RING-type E3 ubiquitin transferase RNF12-A</fullName>
    </alternativeName>
    <alternativeName>
        <fullName>XRnf12</fullName>
    </alternativeName>
</protein>
<gene>
    <name type="primary">rnf12-a</name>
    <name evidence="6" type="synonym">rnf12</name>
</gene>
<evidence type="ECO:0000250" key="1"/>
<evidence type="ECO:0000255" key="2"/>
<evidence type="ECO:0000255" key="3">
    <source>
        <dbReference type="PROSITE-ProRule" id="PRU00175"/>
    </source>
</evidence>
<evidence type="ECO:0000256" key="4">
    <source>
        <dbReference type="SAM" id="MobiDB-lite"/>
    </source>
</evidence>
<evidence type="ECO:0000269" key="5">
    <source>
    </source>
</evidence>
<evidence type="ECO:0000303" key="6">
    <source>
    </source>
</evidence>
<evidence type="ECO:0000305" key="7"/>
<evidence type="ECO:0000312" key="8">
    <source>
        <dbReference type="EMBL" id="AAH82339.1"/>
    </source>
</evidence>
<evidence type="ECO:0000312" key="9">
    <source>
        <dbReference type="EMBL" id="BAC81441.1"/>
    </source>
</evidence>
<keyword id="KW-0025">Alternative splicing</keyword>
<keyword id="KW-0217">Developmental protein</keyword>
<keyword id="KW-0479">Metal-binding</keyword>
<keyword id="KW-0539">Nucleus</keyword>
<keyword id="KW-1185">Reference proteome</keyword>
<keyword id="KW-0808">Transferase</keyword>
<keyword id="KW-0833">Ubl conjugation pathway</keyword>
<keyword id="KW-0862">Zinc</keyword>
<keyword id="KW-0863">Zinc-finger</keyword>
<name>RF12A_XENLA</name>